<gene>
    <name evidence="1" type="primary">mutS</name>
    <name type="ordered locus">RPE_0246</name>
</gene>
<comment type="function">
    <text evidence="1">This protein is involved in the repair of mismatches in DNA. It is possible that it carries out the mismatch recognition step. This protein has a weak ATPase activity.</text>
</comment>
<comment type="similarity">
    <text evidence="1">Belongs to the DNA mismatch repair MutS family.</text>
</comment>
<accession>Q07V29</accession>
<feature type="chain" id="PRO_1000008083" description="DNA mismatch repair protein MutS">
    <location>
        <begin position="1"/>
        <end position="906"/>
    </location>
</feature>
<feature type="binding site" evidence="1">
    <location>
        <begin position="656"/>
        <end position="663"/>
    </location>
    <ligand>
        <name>ATP</name>
        <dbReference type="ChEBI" id="CHEBI:30616"/>
    </ligand>
</feature>
<proteinExistence type="inferred from homology"/>
<organism>
    <name type="scientific">Rhodopseudomonas palustris (strain BisA53)</name>
    <dbReference type="NCBI Taxonomy" id="316055"/>
    <lineage>
        <taxon>Bacteria</taxon>
        <taxon>Pseudomonadati</taxon>
        <taxon>Pseudomonadota</taxon>
        <taxon>Alphaproteobacteria</taxon>
        <taxon>Hyphomicrobiales</taxon>
        <taxon>Nitrobacteraceae</taxon>
        <taxon>Rhodopseudomonas</taxon>
    </lineage>
</organism>
<keyword id="KW-0067">ATP-binding</keyword>
<keyword id="KW-0227">DNA damage</keyword>
<keyword id="KW-0234">DNA repair</keyword>
<keyword id="KW-0238">DNA-binding</keyword>
<keyword id="KW-0547">Nucleotide-binding</keyword>
<protein>
    <recommendedName>
        <fullName evidence="1">DNA mismatch repair protein MutS</fullName>
    </recommendedName>
</protein>
<evidence type="ECO:0000255" key="1">
    <source>
        <dbReference type="HAMAP-Rule" id="MF_00096"/>
    </source>
</evidence>
<reference key="1">
    <citation type="submission" date="2006-09" db="EMBL/GenBank/DDBJ databases">
        <title>Complete sequence of Rhodopseudomonas palustris BisA53.</title>
        <authorList>
            <consortium name="US DOE Joint Genome Institute"/>
            <person name="Copeland A."/>
            <person name="Lucas S."/>
            <person name="Lapidus A."/>
            <person name="Barry K."/>
            <person name="Detter J.C."/>
            <person name="Glavina del Rio T."/>
            <person name="Hammon N."/>
            <person name="Israni S."/>
            <person name="Dalin E."/>
            <person name="Tice H."/>
            <person name="Pitluck S."/>
            <person name="Chain P."/>
            <person name="Malfatti S."/>
            <person name="Shin M."/>
            <person name="Vergez L."/>
            <person name="Schmutz J."/>
            <person name="Larimer F."/>
            <person name="Land M."/>
            <person name="Hauser L."/>
            <person name="Pelletier D.A."/>
            <person name="Kyrpides N."/>
            <person name="Kim E."/>
            <person name="Harwood C.S."/>
            <person name="Oda Y."/>
            <person name="Richardson P."/>
        </authorList>
    </citation>
    <scope>NUCLEOTIDE SEQUENCE [LARGE SCALE GENOMIC DNA]</scope>
    <source>
        <strain>BisA53</strain>
    </source>
</reference>
<name>MUTS_RHOP5</name>
<dbReference type="EMBL" id="CP000463">
    <property type="protein sequence ID" value="ABJ04205.1"/>
    <property type="molecule type" value="Genomic_DNA"/>
</dbReference>
<dbReference type="SMR" id="Q07V29"/>
<dbReference type="STRING" id="316055.RPE_0246"/>
<dbReference type="KEGG" id="rpe:RPE_0246"/>
<dbReference type="eggNOG" id="COG0249">
    <property type="taxonomic scope" value="Bacteria"/>
</dbReference>
<dbReference type="HOGENOM" id="CLU_002472_4_0_5"/>
<dbReference type="OrthoDB" id="9802448at2"/>
<dbReference type="GO" id="GO:0005829">
    <property type="term" value="C:cytosol"/>
    <property type="evidence" value="ECO:0007669"/>
    <property type="project" value="TreeGrafter"/>
</dbReference>
<dbReference type="GO" id="GO:0005524">
    <property type="term" value="F:ATP binding"/>
    <property type="evidence" value="ECO:0007669"/>
    <property type="project" value="UniProtKB-UniRule"/>
</dbReference>
<dbReference type="GO" id="GO:0140664">
    <property type="term" value="F:ATP-dependent DNA damage sensor activity"/>
    <property type="evidence" value="ECO:0007669"/>
    <property type="project" value="InterPro"/>
</dbReference>
<dbReference type="GO" id="GO:0003684">
    <property type="term" value="F:damaged DNA binding"/>
    <property type="evidence" value="ECO:0007669"/>
    <property type="project" value="UniProtKB-UniRule"/>
</dbReference>
<dbReference type="GO" id="GO:0030983">
    <property type="term" value="F:mismatched DNA binding"/>
    <property type="evidence" value="ECO:0007669"/>
    <property type="project" value="InterPro"/>
</dbReference>
<dbReference type="GO" id="GO:0006298">
    <property type="term" value="P:mismatch repair"/>
    <property type="evidence" value="ECO:0007669"/>
    <property type="project" value="UniProtKB-UniRule"/>
</dbReference>
<dbReference type="CDD" id="cd03284">
    <property type="entry name" value="ABC_MutS1"/>
    <property type="match status" value="1"/>
</dbReference>
<dbReference type="FunFam" id="3.40.1170.10:FF:000001">
    <property type="entry name" value="DNA mismatch repair protein MutS"/>
    <property type="match status" value="1"/>
</dbReference>
<dbReference type="FunFam" id="3.40.50.300:FF:001579">
    <property type="entry name" value="DNA mismatch repair protein MutS"/>
    <property type="match status" value="1"/>
</dbReference>
<dbReference type="Gene3D" id="1.10.1420.10">
    <property type="match status" value="2"/>
</dbReference>
<dbReference type="Gene3D" id="6.10.140.430">
    <property type="match status" value="1"/>
</dbReference>
<dbReference type="Gene3D" id="3.40.1170.10">
    <property type="entry name" value="DNA repair protein MutS, domain I"/>
    <property type="match status" value="1"/>
</dbReference>
<dbReference type="Gene3D" id="3.30.420.110">
    <property type="entry name" value="MutS, connector domain"/>
    <property type="match status" value="1"/>
</dbReference>
<dbReference type="Gene3D" id="3.40.50.300">
    <property type="entry name" value="P-loop containing nucleotide triphosphate hydrolases"/>
    <property type="match status" value="1"/>
</dbReference>
<dbReference type="HAMAP" id="MF_00096">
    <property type="entry name" value="MutS"/>
    <property type="match status" value="1"/>
</dbReference>
<dbReference type="InterPro" id="IPR005748">
    <property type="entry name" value="DNA_mismatch_repair_MutS"/>
</dbReference>
<dbReference type="InterPro" id="IPR007695">
    <property type="entry name" value="DNA_mismatch_repair_MutS-lik_N"/>
</dbReference>
<dbReference type="InterPro" id="IPR017261">
    <property type="entry name" value="DNA_mismatch_repair_MutS/MSH"/>
</dbReference>
<dbReference type="InterPro" id="IPR000432">
    <property type="entry name" value="DNA_mismatch_repair_MutS_C"/>
</dbReference>
<dbReference type="InterPro" id="IPR007861">
    <property type="entry name" value="DNA_mismatch_repair_MutS_clamp"/>
</dbReference>
<dbReference type="InterPro" id="IPR007696">
    <property type="entry name" value="DNA_mismatch_repair_MutS_core"/>
</dbReference>
<dbReference type="InterPro" id="IPR016151">
    <property type="entry name" value="DNA_mismatch_repair_MutS_N"/>
</dbReference>
<dbReference type="InterPro" id="IPR036187">
    <property type="entry name" value="DNA_mismatch_repair_MutS_sf"/>
</dbReference>
<dbReference type="InterPro" id="IPR007860">
    <property type="entry name" value="DNA_mmatch_repair_MutS_con_dom"/>
</dbReference>
<dbReference type="InterPro" id="IPR045076">
    <property type="entry name" value="MutS"/>
</dbReference>
<dbReference type="InterPro" id="IPR036678">
    <property type="entry name" value="MutS_con_dom_sf"/>
</dbReference>
<dbReference type="InterPro" id="IPR027417">
    <property type="entry name" value="P-loop_NTPase"/>
</dbReference>
<dbReference type="NCBIfam" id="TIGR01070">
    <property type="entry name" value="mutS1"/>
    <property type="match status" value="1"/>
</dbReference>
<dbReference type="NCBIfam" id="NF003810">
    <property type="entry name" value="PRK05399.1"/>
    <property type="match status" value="1"/>
</dbReference>
<dbReference type="PANTHER" id="PTHR11361:SF34">
    <property type="entry name" value="DNA MISMATCH REPAIR PROTEIN MSH1, MITOCHONDRIAL"/>
    <property type="match status" value="1"/>
</dbReference>
<dbReference type="PANTHER" id="PTHR11361">
    <property type="entry name" value="DNA MISMATCH REPAIR PROTEIN MUTS FAMILY MEMBER"/>
    <property type="match status" value="1"/>
</dbReference>
<dbReference type="Pfam" id="PF01624">
    <property type="entry name" value="MutS_I"/>
    <property type="match status" value="1"/>
</dbReference>
<dbReference type="Pfam" id="PF05188">
    <property type="entry name" value="MutS_II"/>
    <property type="match status" value="1"/>
</dbReference>
<dbReference type="Pfam" id="PF05192">
    <property type="entry name" value="MutS_III"/>
    <property type="match status" value="1"/>
</dbReference>
<dbReference type="Pfam" id="PF05190">
    <property type="entry name" value="MutS_IV"/>
    <property type="match status" value="1"/>
</dbReference>
<dbReference type="Pfam" id="PF00488">
    <property type="entry name" value="MutS_V"/>
    <property type="match status" value="1"/>
</dbReference>
<dbReference type="PIRSF" id="PIRSF037677">
    <property type="entry name" value="DNA_mis_repair_Msh6"/>
    <property type="match status" value="1"/>
</dbReference>
<dbReference type="SMART" id="SM00534">
    <property type="entry name" value="MUTSac"/>
    <property type="match status" value="1"/>
</dbReference>
<dbReference type="SMART" id="SM00533">
    <property type="entry name" value="MUTSd"/>
    <property type="match status" value="1"/>
</dbReference>
<dbReference type="SUPFAM" id="SSF55271">
    <property type="entry name" value="DNA repair protein MutS, domain I"/>
    <property type="match status" value="1"/>
</dbReference>
<dbReference type="SUPFAM" id="SSF53150">
    <property type="entry name" value="DNA repair protein MutS, domain II"/>
    <property type="match status" value="1"/>
</dbReference>
<dbReference type="SUPFAM" id="SSF48334">
    <property type="entry name" value="DNA repair protein MutS, domain III"/>
    <property type="match status" value="1"/>
</dbReference>
<dbReference type="SUPFAM" id="SSF52540">
    <property type="entry name" value="P-loop containing nucleoside triphosphate hydrolases"/>
    <property type="match status" value="1"/>
</dbReference>
<dbReference type="PROSITE" id="PS00486">
    <property type="entry name" value="DNA_MISMATCH_REPAIR_2"/>
    <property type="match status" value="1"/>
</dbReference>
<sequence length="906" mass="97140">MTLQPAILSEPDTPAPAEALTRVSPMMEQYHEIKAANPGLLLFYRMGDFYELFFEDAEIAARALGITLTKRGKHKGQDIPMCGVPVERSDDYLHRLIALGHRVAVCEQTEDPAAARARKSVVRRDVVRLITPGTLTEDTLLDARTNNYLLAIARVRGSTGGDRLGLAWIDISTAEFIVTECALGELAATLARINPNEAIVTDALYSDPELGPLLRELAAVTPLTRDVFDSATAERRLCDYFAVATMDGLAAMSRLEATAAAACITYVERTQLGQKPPLSPPSREIAGATMAIDPATRANLELTRTLAGERRGSLLDAIDCTVTAAGSRLLAQRLAAPLTDAGAIAHRLDAVEAFVADPILRDGLRATLRAAPDLARALARLSVGRGGPRDLAALRDGLLAADAALAQLAAATSLPQEILAAMAALRRPSRQLADEFSRALADELPLQKRDGGFVRANYQAALDETRALRDASRQVVAAMQARYADAAGVKGLKIRHNNVLGYFVEVTAQHGERLMAAPMNATFIHRQTLAGQVRFTTAELGEIEAKIANAGERALGLELEIFEKLTAMVIAATDDLRAAAQAFATLDVTLALAKLAIDDNYVRPEVDGSLSFAIEGGRHPVVEQALKRDGQPFIANACDLSPGPAQSSGQIWLITGPNMAGKSTFLRQNALIALLAQIGAFVPAARARIGIVDRLFSRVGAADDLARGRSTFMVEMVETAVILNQASERALVILDEIGRGTATFDGLSIAWAAIEHLHESNRCRALFATHYHELTALSGKLPRVFNATVRVKEWHGEVVFLHEVMPGSADRSYGIQVAKLAGLPPSVIARAKTVLAKLEANDRGQSARALADDLPLFALTARAPAEALPPTEAEQLIAALQALHPDELTPREALDALYALKAKLPK</sequence>